<accession>Q7JR71</accession>
<accession>D8FT33</accession>
<accession>Q0E9C3</accession>
<accession>Q5U195</accession>
<accession>Q95T42</accession>
<keyword id="KW-0025">Alternative splicing</keyword>
<keyword id="KW-0049">Antioxidant</keyword>
<keyword id="KW-0186">Copper</keyword>
<keyword id="KW-1015">Disulfide bond</keyword>
<keyword id="KW-0325">Glycoprotein</keyword>
<keyword id="KW-0479">Metal-binding</keyword>
<keyword id="KW-0560">Oxidoreductase</keyword>
<keyword id="KW-1185">Reference proteome</keyword>
<keyword id="KW-0964">Secreted</keyword>
<keyword id="KW-0732">Signal</keyword>
<keyword id="KW-0862">Zinc</keyword>
<gene>
    <name evidence="15" type="primary">Sod3</name>
    <name evidence="15" type="ORF">CG9027</name>
</gene>
<comment type="function">
    <text evidence="5 6">Protects the extracellular space from the toxic effects of reactive oxygen intermediates by converting superoxide radicals into hydrogen peroxide and oxygen.</text>
</comment>
<comment type="catalytic activity">
    <reaction evidence="4 5 6">
        <text>2 superoxide + 2 H(+) = H2O2 + O2</text>
        <dbReference type="Rhea" id="RHEA:20696"/>
        <dbReference type="ChEBI" id="CHEBI:15378"/>
        <dbReference type="ChEBI" id="CHEBI:15379"/>
        <dbReference type="ChEBI" id="CHEBI:16240"/>
        <dbReference type="ChEBI" id="CHEBI:18421"/>
        <dbReference type="EC" id="1.15.1.1"/>
    </reaction>
</comment>
<comment type="cofactor">
    <cofactor evidence="1 4">
        <name>Cu cation</name>
        <dbReference type="ChEBI" id="CHEBI:23378"/>
    </cofactor>
</comment>
<comment type="cofactor">
    <cofactor evidence="1 4">
        <name>Zn(2+)</name>
        <dbReference type="ChEBI" id="CHEBI:29105"/>
    </cofactor>
</comment>
<comment type="subcellular location">
    <subcellularLocation>
        <location evidence="5">Secreted</location>
    </subcellularLocation>
</comment>
<comment type="alternative products">
    <event type="alternative splicing"/>
    <isoform>
        <id>Q7JR71-1</id>
        <name evidence="8">1</name>
        <name evidence="15">A</name>
        <name evidence="15">B</name>
        <name evidence="15">F</name>
        <sequence type="displayed"/>
    </isoform>
    <isoform>
        <id>Q7JR71-2</id>
        <name evidence="8">2</name>
        <name evidence="15">D</name>
        <sequence type="described" ref="VSP_058824"/>
    </isoform>
</comment>
<comment type="tissue specificity">
    <text evidence="6">Expressed at higher levels in females compared to males.</text>
</comment>
<comment type="disruption phenotype">
    <text evidence="5">RNAi-mediated knockdown results in reduced lifespan and increased sensitivity to paraquat-induced oxidative stress.</text>
</comment>
<comment type="similarity">
    <text evidence="4">Belongs to the Cu-Zn superoxide dismutase family.</text>
</comment>
<comment type="sequence caution" evidence="9">
    <conflict type="erroneous initiation">
        <sequence resource="EMBL-CDS" id="AAL25378"/>
    </conflict>
    <text>Extended N-terminus.</text>
</comment>
<comment type="sequence caution" evidence="9">
    <conflict type="erroneous initiation">
        <sequence resource="EMBL-CDS" id="AAV36882"/>
    </conflict>
    <text>Extended N-terminus.</text>
</comment>
<comment type="sequence caution" evidence="9">
    <conflict type="erroneous initiation">
        <sequence resource="EMBL-CDS" id="ADJ93828"/>
    </conflict>
    <text>Extended N-terminus.</text>
</comment>
<organism evidence="16">
    <name type="scientific">Drosophila melanogaster</name>
    <name type="common">Fruit fly</name>
    <dbReference type="NCBI Taxonomy" id="7227"/>
    <lineage>
        <taxon>Eukaryota</taxon>
        <taxon>Metazoa</taxon>
        <taxon>Ecdysozoa</taxon>
        <taxon>Arthropoda</taxon>
        <taxon>Hexapoda</taxon>
        <taxon>Insecta</taxon>
        <taxon>Pterygota</taxon>
        <taxon>Neoptera</taxon>
        <taxon>Endopterygota</taxon>
        <taxon>Diptera</taxon>
        <taxon>Brachycera</taxon>
        <taxon>Muscomorpha</taxon>
        <taxon>Ephydroidea</taxon>
        <taxon>Drosophilidae</taxon>
        <taxon>Drosophila</taxon>
        <taxon>Sophophora</taxon>
    </lineage>
</organism>
<proteinExistence type="evidence at protein level"/>
<protein>
    <recommendedName>
        <fullName evidence="7">Extracellular superoxide dismutase [Cu-Zn]</fullName>
        <ecNumber evidence="4 5 6">1.15.1.1</ecNumber>
    </recommendedName>
</protein>
<reference evidence="14" key="1">
    <citation type="journal article" date="2014" name="Biosci. Rep.">
        <title>Cloning and expression analysis of Drosophila extracellular Cu Zn superoxide dismutase.</title>
        <authorList>
            <person name="Blackney M.J."/>
            <person name="Cox R."/>
            <person name="Shepherd D."/>
            <person name="Parker J.D."/>
        </authorList>
    </citation>
    <scope>NUCLEOTIDE SEQUENCE [MRNA] (ISOFORMS 1 AND 2)</scope>
    <scope>FUNCTION</scope>
    <scope>CATALYTIC ACTIVITY</scope>
    <scope>TISSUE SPECIFICITY</scope>
</reference>
<reference evidence="16" key="2">
    <citation type="journal article" date="2000" name="Science">
        <title>The genome sequence of Drosophila melanogaster.</title>
        <authorList>
            <person name="Adams M.D."/>
            <person name="Celniker S.E."/>
            <person name="Holt R.A."/>
            <person name="Evans C.A."/>
            <person name="Gocayne J.D."/>
            <person name="Amanatides P.G."/>
            <person name="Scherer S.E."/>
            <person name="Li P.W."/>
            <person name="Hoskins R.A."/>
            <person name="Galle R.F."/>
            <person name="George R.A."/>
            <person name="Lewis S.E."/>
            <person name="Richards S."/>
            <person name="Ashburner M."/>
            <person name="Henderson S.N."/>
            <person name="Sutton G.G."/>
            <person name="Wortman J.R."/>
            <person name="Yandell M.D."/>
            <person name="Zhang Q."/>
            <person name="Chen L.X."/>
            <person name="Brandon R.C."/>
            <person name="Rogers Y.-H.C."/>
            <person name="Blazej R.G."/>
            <person name="Champe M."/>
            <person name="Pfeiffer B.D."/>
            <person name="Wan K.H."/>
            <person name="Doyle C."/>
            <person name="Baxter E.G."/>
            <person name="Helt G."/>
            <person name="Nelson C.R."/>
            <person name="Miklos G.L.G."/>
            <person name="Abril J.F."/>
            <person name="Agbayani A."/>
            <person name="An H.-J."/>
            <person name="Andrews-Pfannkoch C."/>
            <person name="Baldwin D."/>
            <person name="Ballew R.M."/>
            <person name="Basu A."/>
            <person name="Baxendale J."/>
            <person name="Bayraktaroglu L."/>
            <person name="Beasley E.M."/>
            <person name="Beeson K.Y."/>
            <person name="Benos P.V."/>
            <person name="Berman B.P."/>
            <person name="Bhandari D."/>
            <person name="Bolshakov S."/>
            <person name="Borkova D."/>
            <person name="Botchan M.R."/>
            <person name="Bouck J."/>
            <person name="Brokstein P."/>
            <person name="Brottier P."/>
            <person name="Burtis K.C."/>
            <person name="Busam D.A."/>
            <person name="Butler H."/>
            <person name="Cadieu E."/>
            <person name="Center A."/>
            <person name="Chandra I."/>
            <person name="Cherry J.M."/>
            <person name="Cawley S."/>
            <person name="Dahlke C."/>
            <person name="Davenport L.B."/>
            <person name="Davies P."/>
            <person name="de Pablos B."/>
            <person name="Delcher A."/>
            <person name="Deng Z."/>
            <person name="Mays A.D."/>
            <person name="Dew I."/>
            <person name="Dietz S.M."/>
            <person name="Dodson K."/>
            <person name="Doup L.E."/>
            <person name="Downes M."/>
            <person name="Dugan-Rocha S."/>
            <person name="Dunkov B.C."/>
            <person name="Dunn P."/>
            <person name="Durbin K.J."/>
            <person name="Evangelista C.C."/>
            <person name="Ferraz C."/>
            <person name="Ferriera S."/>
            <person name="Fleischmann W."/>
            <person name="Fosler C."/>
            <person name="Gabrielian A.E."/>
            <person name="Garg N.S."/>
            <person name="Gelbart W.M."/>
            <person name="Glasser K."/>
            <person name="Glodek A."/>
            <person name="Gong F."/>
            <person name="Gorrell J.H."/>
            <person name="Gu Z."/>
            <person name="Guan P."/>
            <person name="Harris M."/>
            <person name="Harris N.L."/>
            <person name="Harvey D.A."/>
            <person name="Heiman T.J."/>
            <person name="Hernandez J.R."/>
            <person name="Houck J."/>
            <person name="Hostin D."/>
            <person name="Houston K.A."/>
            <person name="Howland T.J."/>
            <person name="Wei M.-H."/>
            <person name="Ibegwam C."/>
            <person name="Jalali M."/>
            <person name="Kalush F."/>
            <person name="Karpen G.H."/>
            <person name="Ke Z."/>
            <person name="Kennison J.A."/>
            <person name="Ketchum K.A."/>
            <person name="Kimmel B.E."/>
            <person name="Kodira C.D."/>
            <person name="Kraft C.L."/>
            <person name="Kravitz S."/>
            <person name="Kulp D."/>
            <person name="Lai Z."/>
            <person name="Lasko P."/>
            <person name="Lei Y."/>
            <person name="Levitsky A.A."/>
            <person name="Li J.H."/>
            <person name="Li Z."/>
            <person name="Liang Y."/>
            <person name="Lin X."/>
            <person name="Liu X."/>
            <person name="Mattei B."/>
            <person name="McIntosh T.C."/>
            <person name="McLeod M.P."/>
            <person name="McPherson D."/>
            <person name="Merkulov G."/>
            <person name="Milshina N.V."/>
            <person name="Mobarry C."/>
            <person name="Morris J."/>
            <person name="Moshrefi A."/>
            <person name="Mount S.M."/>
            <person name="Moy M."/>
            <person name="Murphy B."/>
            <person name="Murphy L."/>
            <person name="Muzny D.M."/>
            <person name="Nelson D.L."/>
            <person name="Nelson D.R."/>
            <person name="Nelson K.A."/>
            <person name="Nixon K."/>
            <person name="Nusskern D.R."/>
            <person name="Pacleb J.M."/>
            <person name="Palazzolo M."/>
            <person name="Pittman G.S."/>
            <person name="Pan S."/>
            <person name="Pollard J."/>
            <person name="Puri V."/>
            <person name="Reese M.G."/>
            <person name="Reinert K."/>
            <person name="Remington K."/>
            <person name="Saunders R.D.C."/>
            <person name="Scheeler F."/>
            <person name="Shen H."/>
            <person name="Shue B.C."/>
            <person name="Siden-Kiamos I."/>
            <person name="Simpson M."/>
            <person name="Skupski M.P."/>
            <person name="Smith T.J."/>
            <person name="Spier E."/>
            <person name="Spradling A.C."/>
            <person name="Stapleton M."/>
            <person name="Strong R."/>
            <person name="Sun E."/>
            <person name="Svirskas R."/>
            <person name="Tector C."/>
            <person name="Turner R."/>
            <person name="Venter E."/>
            <person name="Wang A.H."/>
            <person name="Wang X."/>
            <person name="Wang Z.-Y."/>
            <person name="Wassarman D.A."/>
            <person name="Weinstock G.M."/>
            <person name="Weissenbach J."/>
            <person name="Williams S.M."/>
            <person name="Woodage T."/>
            <person name="Worley K.C."/>
            <person name="Wu D."/>
            <person name="Yang S."/>
            <person name="Yao Q.A."/>
            <person name="Ye J."/>
            <person name="Yeh R.-F."/>
            <person name="Zaveri J.S."/>
            <person name="Zhan M."/>
            <person name="Zhang G."/>
            <person name="Zhao Q."/>
            <person name="Zheng L."/>
            <person name="Zheng X.H."/>
            <person name="Zhong F.N."/>
            <person name="Zhong W."/>
            <person name="Zhou X."/>
            <person name="Zhu S.C."/>
            <person name="Zhu X."/>
            <person name="Smith H.O."/>
            <person name="Gibbs R.A."/>
            <person name="Myers E.W."/>
            <person name="Rubin G.M."/>
            <person name="Venter J.C."/>
        </authorList>
    </citation>
    <scope>NUCLEOTIDE SEQUENCE [LARGE SCALE GENOMIC DNA]</scope>
    <source>
        <strain evidence="16">Berkeley</strain>
    </source>
</reference>
<reference evidence="16" key="3">
    <citation type="journal article" date="2002" name="Genome Biol.">
        <title>Annotation of the Drosophila melanogaster euchromatic genome: a systematic review.</title>
        <authorList>
            <person name="Misra S."/>
            <person name="Crosby M.A."/>
            <person name="Mungall C.J."/>
            <person name="Matthews B.B."/>
            <person name="Campbell K.S."/>
            <person name="Hradecky P."/>
            <person name="Huang Y."/>
            <person name="Kaminker J.S."/>
            <person name="Millburn G.H."/>
            <person name="Prochnik S.E."/>
            <person name="Smith C.D."/>
            <person name="Tupy J.L."/>
            <person name="Whitfield E.J."/>
            <person name="Bayraktaroglu L."/>
            <person name="Berman B.P."/>
            <person name="Bettencourt B.R."/>
            <person name="Celniker S.E."/>
            <person name="de Grey A.D.N.J."/>
            <person name="Drysdale R.A."/>
            <person name="Harris N.L."/>
            <person name="Richter J."/>
            <person name="Russo S."/>
            <person name="Schroeder A.J."/>
            <person name="Shu S.Q."/>
            <person name="Stapleton M."/>
            <person name="Yamada C."/>
            <person name="Ashburner M."/>
            <person name="Gelbart W.M."/>
            <person name="Rubin G.M."/>
            <person name="Lewis S.E."/>
        </authorList>
    </citation>
    <scope>GENOME REANNOTATION</scope>
    <source>
        <strain evidence="16">Berkeley</strain>
    </source>
</reference>
<reference evidence="10" key="4">
    <citation type="journal article" date="2002" name="Genome Biol.">
        <title>A Drosophila full-length cDNA resource.</title>
        <authorList>
            <person name="Stapleton M."/>
            <person name="Carlson J.W."/>
            <person name="Brokstein P."/>
            <person name="Yu C."/>
            <person name="Champe M."/>
            <person name="George R.A."/>
            <person name="Guarin H."/>
            <person name="Kronmiller B."/>
            <person name="Pacleb J.M."/>
            <person name="Park S."/>
            <person name="Wan K.H."/>
            <person name="Rubin G.M."/>
            <person name="Celniker S.E."/>
        </authorList>
    </citation>
    <scope>NUCLEOTIDE SEQUENCE [LARGE SCALE MRNA] (ISOFORM 1)</scope>
    <source>
        <strain evidence="10">Berkeley</strain>
        <tissue evidence="10">Head</tissue>
    </source>
</reference>
<reference evidence="11 12 13" key="5">
    <citation type="submission" date="2010-07" db="EMBL/GenBank/DDBJ databases">
        <authorList>
            <person name="Stapleton M."/>
            <person name="Brokstein P."/>
            <person name="Hong L."/>
            <person name="Agbayani A."/>
            <person name="Booth B."/>
            <person name="Carlson J."/>
            <person name="Champe M."/>
            <person name="Chavez C."/>
            <person name="Dorsett V."/>
            <person name="Dresnek D."/>
            <person name="Farfan D."/>
            <person name="Frise E."/>
            <person name="George R."/>
            <person name="Gonzalez M."/>
            <person name="Guarin H."/>
            <person name="Kronmiller B."/>
            <person name="Li P."/>
            <person name="Liao G."/>
            <person name="Miranda A."/>
            <person name="Mungall C.J."/>
            <person name="Nunoo J."/>
            <person name="Pacleb J."/>
            <person name="Paragas V."/>
            <person name="Park S."/>
            <person name="Patel S."/>
            <person name="Phouanenavong S."/>
            <person name="Sandler J."/>
            <person name="Wan K."/>
            <person name="Yu C."/>
            <person name="Lewis S.E."/>
            <person name="Rubin G.M."/>
            <person name="Celniker S."/>
        </authorList>
    </citation>
    <scope>NUCLEOTIDE SEQUENCE [LARGE SCALE MRNA] (ISOFORMS 1 AND 2)</scope>
    <source>
        <strain evidence="11 12 13">Berkeley</strain>
        <tissue evidence="12">Embryo</tissue>
        <tissue evidence="11">Larva</tissue>
        <tissue evidence="11">Pupae</tissue>
    </source>
</reference>
<reference evidence="9" key="6">
    <citation type="journal article" date="2011" name="FEBS Lett.">
        <title>Identification of Drosophila SOD3 and its protective role against phototoxic damage to cells.</title>
        <authorList>
            <person name="Jung I."/>
            <person name="Kim T.Y."/>
            <person name="Kim-Ha J."/>
        </authorList>
    </citation>
    <scope>FUNCTION</scope>
    <scope>CATALYTIC ACTIVITY</scope>
    <scope>SUBCELLULAR LOCATION</scope>
    <scope>DISRUPTION PHENOTYPE</scope>
</reference>
<evidence type="ECO:0000250" key="1">
    <source>
        <dbReference type="UniProtKB" id="P00441"/>
    </source>
</evidence>
<evidence type="ECO:0000255" key="2"/>
<evidence type="ECO:0000255" key="3">
    <source>
        <dbReference type="PROSITE-ProRule" id="PRU00498"/>
    </source>
</evidence>
<evidence type="ECO:0000255" key="4">
    <source>
        <dbReference type="RuleBase" id="RU000393"/>
    </source>
</evidence>
<evidence type="ECO:0000269" key="5">
    <source>
    </source>
</evidence>
<evidence type="ECO:0000269" key="6">
    <source>
    </source>
</evidence>
<evidence type="ECO:0000303" key="7">
    <source>
    </source>
</evidence>
<evidence type="ECO:0000303" key="8">
    <source>
    </source>
</evidence>
<evidence type="ECO:0000305" key="9"/>
<evidence type="ECO:0000312" key="10">
    <source>
        <dbReference type="EMBL" id="AAL25378.1"/>
    </source>
</evidence>
<evidence type="ECO:0000312" key="11">
    <source>
        <dbReference type="EMBL" id="AAO24980.1"/>
    </source>
</evidence>
<evidence type="ECO:0000312" key="12">
    <source>
        <dbReference type="EMBL" id="AAV36882.1"/>
    </source>
</evidence>
<evidence type="ECO:0000312" key="13">
    <source>
        <dbReference type="EMBL" id="ADJ93828.1"/>
    </source>
</evidence>
<evidence type="ECO:0000312" key="14">
    <source>
        <dbReference type="EMBL" id="AIU57094.1"/>
    </source>
</evidence>
<evidence type="ECO:0000312" key="15">
    <source>
        <dbReference type="FlyBase" id="FBgn0033631"/>
    </source>
</evidence>
<evidence type="ECO:0000312" key="16">
    <source>
        <dbReference type="Proteomes" id="UP000000803"/>
    </source>
</evidence>
<feature type="signal peptide" evidence="2">
    <location>
        <begin position="1"/>
        <end position="18"/>
    </location>
</feature>
<feature type="chain" id="PRO_5008177262" description="Extracellular superoxide dismutase [Cu-Zn]">
    <location>
        <begin position="19"/>
        <end position="181"/>
    </location>
</feature>
<feature type="binding site" evidence="1">
    <location>
        <position position="75"/>
    </location>
    <ligand>
        <name>Cu cation</name>
        <dbReference type="ChEBI" id="CHEBI:23378"/>
        <note>catalytic</note>
    </ligand>
</feature>
<feature type="binding site" evidence="1">
    <location>
        <position position="77"/>
    </location>
    <ligand>
        <name>Cu cation</name>
        <dbReference type="ChEBI" id="CHEBI:23378"/>
        <note>catalytic</note>
    </ligand>
</feature>
<feature type="binding site" evidence="1">
    <location>
        <position position="92"/>
    </location>
    <ligand>
        <name>Cu cation</name>
        <dbReference type="ChEBI" id="CHEBI:23378"/>
        <note>catalytic</note>
    </ligand>
</feature>
<feature type="binding site" evidence="1">
    <location>
        <position position="92"/>
    </location>
    <ligand>
        <name>Zn(2+)</name>
        <dbReference type="ChEBI" id="CHEBI:29105"/>
        <note>structural</note>
    </ligand>
</feature>
<feature type="binding site" evidence="1">
    <location>
        <position position="100"/>
    </location>
    <ligand>
        <name>Zn(2+)</name>
        <dbReference type="ChEBI" id="CHEBI:29105"/>
        <note>structural</note>
    </ligand>
</feature>
<feature type="binding site" evidence="1">
    <location>
        <position position="109"/>
    </location>
    <ligand>
        <name>Zn(2+)</name>
        <dbReference type="ChEBI" id="CHEBI:29105"/>
        <note>structural</note>
    </ligand>
</feature>
<feature type="binding site" evidence="1">
    <location>
        <position position="112"/>
    </location>
    <ligand>
        <name>Zn(2+)</name>
        <dbReference type="ChEBI" id="CHEBI:29105"/>
        <note>structural</note>
    </ligand>
</feature>
<feature type="binding site" evidence="1">
    <location>
        <position position="149"/>
    </location>
    <ligand>
        <name>Cu cation</name>
        <dbReference type="ChEBI" id="CHEBI:23378"/>
        <note>catalytic</note>
    </ligand>
</feature>
<feature type="glycosylation site" description="N-linked (GlcNAc...) asparagine" evidence="3">
    <location>
        <position position="46"/>
    </location>
</feature>
<feature type="glycosylation site" description="N-linked (GlcNAc...) asparagine" evidence="3">
    <location>
        <position position="119"/>
    </location>
</feature>
<feature type="glycosylation site" description="N-linked (GlcNAc...) asparagine" evidence="3">
    <location>
        <position position="159"/>
    </location>
</feature>
<feature type="disulfide bond" evidence="1">
    <location>
        <begin position="86"/>
        <end position="175"/>
    </location>
</feature>
<feature type="splice variant" id="VSP_058824" description="In isoform 2.">
    <original>K</original>
    <variation>NSDVDEWPCRDGGAGALRYSFSILTVIVALIMARSLD</variation>
    <location>
        <position position="181"/>
    </location>
</feature>
<dbReference type="EC" id="1.15.1.1" evidence="4 5 6"/>
<dbReference type="EMBL" id="KM360086">
    <property type="protein sequence ID" value="AIU57094.1"/>
    <property type="molecule type" value="mRNA"/>
</dbReference>
<dbReference type="EMBL" id="KM360087">
    <property type="protein sequence ID" value="AIU57095.1"/>
    <property type="molecule type" value="mRNA"/>
</dbReference>
<dbReference type="EMBL" id="AE013599">
    <property type="protein sequence ID" value="AAF58647.3"/>
    <property type="molecule type" value="Genomic_DNA"/>
</dbReference>
<dbReference type="EMBL" id="AE013599">
    <property type="protein sequence ID" value="AAG22285.1"/>
    <property type="molecule type" value="Genomic_DNA"/>
</dbReference>
<dbReference type="EMBL" id="AE013599">
    <property type="protein sequence ID" value="ABI31086.1"/>
    <property type="molecule type" value="Genomic_DNA"/>
</dbReference>
<dbReference type="EMBL" id="AE013599">
    <property type="protein sequence ID" value="ALI30174.1"/>
    <property type="molecule type" value="Genomic_DNA"/>
</dbReference>
<dbReference type="EMBL" id="AY060339">
    <property type="protein sequence ID" value="AAL25378.1"/>
    <property type="status" value="ALT_INIT"/>
    <property type="molecule type" value="mRNA"/>
</dbReference>
<dbReference type="EMBL" id="BT003225">
    <property type="protein sequence ID" value="AAO24980.1"/>
    <property type="molecule type" value="mRNA"/>
</dbReference>
<dbReference type="EMBL" id="BT015997">
    <property type="protein sequence ID" value="AAV36882.1"/>
    <property type="status" value="ALT_INIT"/>
    <property type="molecule type" value="mRNA"/>
</dbReference>
<dbReference type="EMBL" id="BT125055">
    <property type="protein sequence ID" value="ADJ93828.1"/>
    <property type="status" value="ALT_INIT"/>
    <property type="molecule type" value="mRNA"/>
</dbReference>
<dbReference type="RefSeq" id="NP_001036536.1">
    <molecule id="Q7JR71-2"/>
    <property type="nucleotide sequence ID" value="NM_001043071.2"/>
</dbReference>
<dbReference type="RefSeq" id="NP_001303344.1">
    <molecule id="Q7JR71-1"/>
    <property type="nucleotide sequence ID" value="NM_001316415.1"/>
</dbReference>
<dbReference type="RefSeq" id="NP_610682.2">
    <molecule id="Q7JR71-1"/>
    <property type="nucleotide sequence ID" value="NM_136838.3"/>
</dbReference>
<dbReference type="RefSeq" id="NP_725046.2">
    <molecule id="Q7JR71-1"/>
    <property type="nucleotide sequence ID" value="NM_165829.3"/>
</dbReference>
<dbReference type="SMR" id="Q7JR71"/>
<dbReference type="FunCoup" id="Q7JR71">
    <property type="interactions" value="92"/>
</dbReference>
<dbReference type="IntAct" id="Q7JR71">
    <property type="interactions" value="70"/>
</dbReference>
<dbReference type="STRING" id="7227.FBpp0308571"/>
<dbReference type="GlyCosmos" id="Q7JR71">
    <property type="glycosylation" value="3 sites, No reported glycans"/>
</dbReference>
<dbReference type="GlyGen" id="Q7JR71">
    <property type="glycosylation" value="4 sites, 1 O-linked glycan (1 site)"/>
</dbReference>
<dbReference type="PaxDb" id="7227-FBpp0110197"/>
<dbReference type="DNASU" id="36232"/>
<dbReference type="EnsemblMetazoa" id="FBtr0089938">
    <molecule id="Q7JR71-1"/>
    <property type="protein sequence ID" value="FBpp0088877"/>
    <property type="gene ID" value="FBgn0033631"/>
</dbReference>
<dbReference type="EnsemblMetazoa" id="FBtr0089939">
    <molecule id="Q7JR71-1"/>
    <property type="protein sequence ID" value="FBpp0088878"/>
    <property type="gene ID" value="FBgn0033631"/>
</dbReference>
<dbReference type="EnsemblMetazoa" id="FBtr0110897">
    <molecule id="Q7JR71-2"/>
    <property type="protein sequence ID" value="FBpp0110197"/>
    <property type="gene ID" value="FBgn0033631"/>
</dbReference>
<dbReference type="EnsemblMetazoa" id="FBtr0433531">
    <molecule id="Q7JR71-1"/>
    <property type="protein sequence ID" value="FBpp0390663"/>
    <property type="gene ID" value="FBgn0033631"/>
</dbReference>
<dbReference type="GeneID" id="36232"/>
<dbReference type="KEGG" id="dme:Dmel_CG9027"/>
<dbReference type="UCSC" id="CG9027-RA">
    <molecule id="Q7JR71-1"/>
    <property type="organism name" value="d. melanogaster"/>
</dbReference>
<dbReference type="AGR" id="FB:FBgn0033631"/>
<dbReference type="CTD" id="6649"/>
<dbReference type="FlyBase" id="FBgn0033631">
    <property type="gene designation" value="Sod3"/>
</dbReference>
<dbReference type="VEuPathDB" id="VectorBase:FBgn0033631"/>
<dbReference type="eggNOG" id="KOG0441">
    <property type="taxonomic scope" value="Eukaryota"/>
</dbReference>
<dbReference type="GeneTree" id="ENSGT00940000168521"/>
<dbReference type="HOGENOM" id="CLU_056632_4_0_1"/>
<dbReference type="InParanoid" id="Q7JR71"/>
<dbReference type="OMA" id="IVAHEGC"/>
<dbReference type="OrthoDB" id="2015551at2759"/>
<dbReference type="PhylomeDB" id="Q7JR71"/>
<dbReference type="Reactome" id="R-DME-114608">
    <property type="pathway name" value="Platelet degranulation"/>
</dbReference>
<dbReference type="Reactome" id="R-DME-3299685">
    <property type="pathway name" value="Detoxification of Reactive Oxygen Species"/>
</dbReference>
<dbReference type="SignaLink" id="Q7JR71"/>
<dbReference type="BioGRID-ORCS" id="36232">
    <property type="hits" value="0 hits in 3 CRISPR screens"/>
</dbReference>
<dbReference type="GenomeRNAi" id="36232"/>
<dbReference type="PRO" id="PR:Q7JR71"/>
<dbReference type="Proteomes" id="UP000000803">
    <property type="component" value="Chromosome 2R"/>
</dbReference>
<dbReference type="Bgee" id="FBgn0033631">
    <property type="expression patterns" value="Expressed in ensheathing neuropil associated glial cell (Drosophila) in brain and 186 other cell types or tissues"/>
</dbReference>
<dbReference type="ExpressionAtlas" id="Q7JR71">
    <property type="expression patterns" value="baseline and differential"/>
</dbReference>
<dbReference type="GO" id="GO:0005615">
    <property type="term" value="C:extracellular space"/>
    <property type="evidence" value="ECO:0000314"/>
    <property type="project" value="FlyBase"/>
</dbReference>
<dbReference type="GO" id="GO:0005886">
    <property type="term" value="C:plasma membrane"/>
    <property type="evidence" value="ECO:0007005"/>
    <property type="project" value="FlyBase"/>
</dbReference>
<dbReference type="GO" id="GO:0005507">
    <property type="term" value="F:copper ion binding"/>
    <property type="evidence" value="ECO:0000318"/>
    <property type="project" value="GO_Central"/>
</dbReference>
<dbReference type="GO" id="GO:0004784">
    <property type="term" value="F:superoxide dismutase activity"/>
    <property type="evidence" value="ECO:0000314"/>
    <property type="project" value="FlyBase"/>
</dbReference>
<dbReference type="GO" id="GO:0019430">
    <property type="term" value="P:removal of superoxide radicals"/>
    <property type="evidence" value="ECO:0000315"/>
    <property type="project" value="FlyBase"/>
</dbReference>
<dbReference type="GO" id="GO:0006979">
    <property type="term" value="P:response to oxidative stress"/>
    <property type="evidence" value="ECO:0000315"/>
    <property type="project" value="FlyBase"/>
</dbReference>
<dbReference type="GO" id="GO:0009650">
    <property type="term" value="P:UV protection"/>
    <property type="evidence" value="ECO:0000314"/>
    <property type="project" value="FlyBase"/>
</dbReference>
<dbReference type="CDD" id="cd00305">
    <property type="entry name" value="Cu-Zn_Superoxide_Dismutase"/>
    <property type="match status" value="1"/>
</dbReference>
<dbReference type="FunFam" id="2.60.40.200:FF:000001">
    <property type="entry name" value="Superoxide dismutase [Cu-Zn]"/>
    <property type="match status" value="1"/>
</dbReference>
<dbReference type="Gene3D" id="2.60.40.200">
    <property type="entry name" value="Superoxide dismutase, copper/zinc binding domain"/>
    <property type="match status" value="1"/>
</dbReference>
<dbReference type="InterPro" id="IPR036423">
    <property type="entry name" value="SOD-like_Cu/Zn_dom_sf"/>
</dbReference>
<dbReference type="InterPro" id="IPR024134">
    <property type="entry name" value="SOD_Cu/Zn_/chaperone"/>
</dbReference>
<dbReference type="InterPro" id="IPR018152">
    <property type="entry name" value="SOD_Cu/Zn_BS"/>
</dbReference>
<dbReference type="InterPro" id="IPR001424">
    <property type="entry name" value="SOD_Cu_Zn_dom"/>
</dbReference>
<dbReference type="PANTHER" id="PTHR10003">
    <property type="entry name" value="SUPEROXIDE DISMUTASE CU-ZN -RELATED"/>
    <property type="match status" value="1"/>
</dbReference>
<dbReference type="Pfam" id="PF00080">
    <property type="entry name" value="Sod_Cu"/>
    <property type="match status" value="1"/>
</dbReference>
<dbReference type="PRINTS" id="PR00068">
    <property type="entry name" value="CUZNDISMTASE"/>
</dbReference>
<dbReference type="SUPFAM" id="SSF49329">
    <property type="entry name" value="Cu,Zn superoxide dismutase-like"/>
    <property type="match status" value="1"/>
</dbReference>
<dbReference type="PROSITE" id="PS00087">
    <property type="entry name" value="SOD_CU_ZN_1"/>
    <property type="match status" value="1"/>
</dbReference>
<dbReference type="PROSITE" id="PS00332">
    <property type="entry name" value="SOD_CU_ZN_2"/>
    <property type="match status" value="1"/>
</dbReference>
<name>SODE_DROME</name>
<sequence length="181" mass="19221">MMQYLVVSLALCATICSAAQTRNMPIQAIAYLIGPVQSDNTQVKGNVTFTQNDCGQNVHVRVQLEGLKEGKHGFHIHEKGDLTNGCISMGAHYNPDKVDHGGPDHEVRHVGDLGNLEANSTGIIDVTYTDQVITLTGKLGIIGRGVVVHELEDDLGLGNHTDSKKTGNAGGRIACGVIGIK</sequence>